<name>HUTG_STRP3</name>
<proteinExistence type="inferred from homology"/>
<protein>
    <recommendedName>
        <fullName evidence="1">Formimidoylglutamase</fullName>
        <ecNumber evidence="1">3.5.3.8</ecNumber>
    </recommendedName>
    <alternativeName>
        <fullName evidence="1">Formiminoglutamase</fullName>
    </alternativeName>
    <alternativeName>
        <fullName evidence="1">Formiminoglutamate hydrolase</fullName>
    </alternativeName>
</protein>
<reference key="1">
    <citation type="journal article" date="2002" name="Proc. Natl. Acad. Sci. U.S.A.">
        <title>Genome sequence of a serotype M3 strain of group A Streptococcus: phage-encoded toxins, the high-virulence phenotype, and clone emergence.</title>
        <authorList>
            <person name="Beres S.B."/>
            <person name="Sylva G.L."/>
            <person name="Barbian K.D."/>
            <person name="Lei B."/>
            <person name="Hoff J.S."/>
            <person name="Mammarella N.D."/>
            <person name="Liu M.-Y."/>
            <person name="Smoot J.C."/>
            <person name="Porcella S.F."/>
            <person name="Parkins L.D."/>
            <person name="Campbell D.S."/>
            <person name="Smith T.M."/>
            <person name="McCormick J.K."/>
            <person name="Leung D.Y.M."/>
            <person name="Schlievert P.M."/>
            <person name="Musser J.M."/>
        </authorList>
    </citation>
    <scope>NUCLEOTIDE SEQUENCE [LARGE SCALE GENOMIC DNA]</scope>
    <source>
        <strain>ATCC BAA-595 / MGAS315</strain>
    </source>
</reference>
<feature type="chain" id="PRO_0000173776" description="Formimidoylglutamase">
    <location>
        <begin position="1"/>
        <end position="328"/>
    </location>
</feature>
<feature type="binding site" evidence="1">
    <location>
        <position position="133"/>
    </location>
    <ligand>
        <name>Mn(2+)</name>
        <dbReference type="ChEBI" id="CHEBI:29035"/>
        <label>1</label>
    </ligand>
</feature>
<feature type="binding site" evidence="1">
    <location>
        <position position="159"/>
    </location>
    <ligand>
        <name>Mn(2+)</name>
        <dbReference type="ChEBI" id="CHEBI:29035"/>
        <label>1</label>
    </ligand>
</feature>
<feature type="binding site" evidence="1">
    <location>
        <position position="159"/>
    </location>
    <ligand>
        <name>Mn(2+)</name>
        <dbReference type="ChEBI" id="CHEBI:29035"/>
        <label>2</label>
    </ligand>
</feature>
<feature type="binding site" evidence="1">
    <location>
        <position position="161"/>
    </location>
    <ligand>
        <name>Mn(2+)</name>
        <dbReference type="ChEBI" id="CHEBI:29035"/>
        <label>2</label>
    </ligand>
</feature>
<feature type="binding site" evidence="1">
    <location>
        <position position="163"/>
    </location>
    <ligand>
        <name>Mn(2+)</name>
        <dbReference type="ChEBI" id="CHEBI:29035"/>
        <label>1</label>
    </ligand>
</feature>
<feature type="binding site" evidence="1">
    <location>
        <position position="253"/>
    </location>
    <ligand>
        <name>Mn(2+)</name>
        <dbReference type="ChEBI" id="CHEBI:29035"/>
        <label>1</label>
    </ligand>
</feature>
<feature type="binding site" evidence="1">
    <location>
        <position position="253"/>
    </location>
    <ligand>
        <name>Mn(2+)</name>
        <dbReference type="ChEBI" id="CHEBI:29035"/>
        <label>2</label>
    </ligand>
</feature>
<feature type="binding site" evidence="1">
    <location>
        <position position="255"/>
    </location>
    <ligand>
        <name>Mn(2+)</name>
        <dbReference type="ChEBI" id="CHEBI:29035"/>
        <label>2</label>
    </ligand>
</feature>
<comment type="function">
    <text evidence="1">Catalyzes the conversion of N-formimidoyl-L-glutamate to L-glutamate and formamide.</text>
</comment>
<comment type="catalytic activity">
    <reaction evidence="1">
        <text>N-formimidoyl-L-glutamate + H2O = formamide + L-glutamate</text>
        <dbReference type="Rhea" id="RHEA:22492"/>
        <dbReference type="ChEBI" id="CHEBI:15377"/>
        <dbReference type="ChEBI" id="CHEBI:16397"/>
        <dbReference type="ChEBI" id="CHEBI:29985"/>
        <dbReference type="ChEBI" id="CHEBI:58928"/>
        <dbReference type="EC" id="3.5.3.8"/>
    </reaction>
</comment>
<comment type="cofactor">
    <cofactor evidence="1">
        <name>Mn(2+)</name>
        <dbReference type="ChEBI" id="CHEBI:29035"/>
    </cofactor>
    <text evidence="1">Binds 2 manganese ions per subunit.</text>
</comment>
<comment type="pathway">
    <text evidence="1">Amino-acid degradation; L-histidine degradation into L-glutamate; L-glutamate from N-formimidoyl-L-glutamate (hydrolase route): step 1/1.</text>
</comment>
<comment type="similarity">
    <text evidence="1">Belongs to the arginase family.</text>
</comment>
<dbReference type="EC" id="3.5.3.8" evidence="1"/>
<dbReference type="EMBL" id="AE014074">
    <property type="protein sequence ID" value="AAM80387.1"/>
    <property type="molecule type" value="Genomic_DNA"/>
</dbReference>
<dbReference type="RefSeq" id="WP_002982269.1">
    <property type="nucleotide sequence ID" value="NC_004070.1"/>
</dbReference>
<dbReference type="SMR" id="P0CZ66"/>
<dbReference type="KEGG" id="spg:SpyM3_1780"/>
<dbReference type="HOGENOM" id="CLU_039478_2_0_9"/>
<dbReference type="UniPathway" id="UPA00379">
    <property type="reaction ID" value="UER00552"/>
</dbReference>
<dbReference type="Proteomes" id="UP000000564">
    <property type="component" value="Chromosome"/>
</dbReference>
<dbReference type="GO" id="GO:0008783">
    <property type="term" value="F:agmatinase activity"/>
    <property type="evidence" value="ECO:0007669"/>
    <property type="project" value="TreeGrafter"/>
</dbReference>
<dbReference type="GO" id="GO:0050415">
    <property type="term" value="F:formimidoylglutamase activity"/>
    <property type="evidence" value="ECO:0007669"/>
    <property type="project" value="UniProtKB-UniRule"/>
</dbReference>
<dbReference type="GO" id="GO:0030145">
    <property type="term" value="F:manganese ion binding"/>
    <property type="evidence" value="ECO:0007669"/>
    <property type="project" value="UniProtKB-UniRule"/>
</dbReference>
<dbReference type="GO" id="GO:0019556">
    <property type="term" value="P:L-histidine catabolic process to glutamate and formamide"/>
    <property type="evidence" value="ECO:0007669"/>
    <property type="project" value="UniProtKB-UniPathway"/>
</dbReference>
<dbReference type="GO" id="GO:0019557">
    <property type="term" value="P:L-histidine catabolic process to glutamate and formate"/>
    <property type="evidence" value="ECO:0007669"/>
    <property type="project" value="UniProtKB-UniPathway"/>
</dbReference>
<dbReference type="GO" id="GO:0033389">
    <property type="term" value="P:putrescine biosynthetic process from arginine, via agmatine"/>
    <property type="evidence" value="ECO:0007669"/>
    <property type="project" value="TreeGrafter"/>
</dbReference>
<dbReference type="CDD" id="cd09988">
    <property type="entry name" value="Formimidoylglutamase"/>
    <property type="match status" value="1"/>
</dbReference>
<dbReference type="Gene3D" id="3.40.800.10">
    <property type="entry name" value="Ureohydrolase domain"/>
    <property type="match status" value="1"/>
</dbReference>
<dbReference type="HAMAP" id="MF_00737">
    <property type="entry name" value="Formimidoylglutam"/>
    <property type="match status" value="1"/>
</dbReference>
<dbReference type="InterPro" id="IPR005923">
    <property type="entry name" value="HutG"/>
</dbReference>
<dbReference type="InterPro" id="IPR006035">
    <property type="entry name" value="Ureohydrolase"/>
</dbReference>
<dbReference type="InterPro" id="IPR023696">
    <property type="entry name" value="Ureohydrolase_dom_sf"/>
</dbReference>
<dbReference type="NCBIfam" id="NF010347">
    <property type="entry name" value="PRK13775.1"/>
    <property type="match status" value="1"/>
</dbReference>
<dbReference type="PANTHER" id="PTHR11358">
    <property type="entry name" value="ARGINASE/AGMATINASE"/>
    <property type="match status" value="1"/>
</dbReference>
<dbReference type="PANTHER" id="PTHR11358:SF35">
    <property type="entry name" value="FORMIMIDOYLGLUTAMASE"/>
    <property type="match status" value="1"/>
</dbReference>
<dbReference type="Pfam" id="PF00491">
    <property type="entry name" value="Arginase"/>
    <property type="match status" value="1"/>
</dbReference>
<dbReference type="PIRSF" id="PIRSF036979">
    <property type="entry name" value="Arginase"/>
    <property type="match status" value="1"/>
</dbReference>
<dbReference type="PRINTS" id="PR00116">
    <property type="entry name" value="ARGINASE"/>
</dbReference>
<dbReference type="SUPFAM" id="SSF52768">
    <property type="entry name" value="Arginase/deacetylase"/>
    <property type="match status" value="1"/>
</dbReference>
<dbReference type="PROSITE" id="PS51409">
    <property type="entry name" value="ARGINASE_2"/>
    <property type="match status" value="1"/>
</dbReference>
<accession>P0CZ66</accession>
<accession>Q8K5L4</accession>
<organism>
    <name type="scientific">Streptococcus pyogenes serotype M3 (strain ATCC BAA-595 / MGAS315)</name>
    <dbReference type="NCBI Taxonomy" id="198466"/>
    <lineage>
        <taxon>Bacteria</taxon>
        <taxon>Bacillati</taxon>
        <taxon>Bacillota</taxon>
        <taxon>Bacilli</taxon>
        <taxon>Lactobacillales</taxon>
        <taxon>Streptococcaceae</taxon>
        <taxon>Streptococcus</taxon>
    </lineage>
</organism>
<evidence type="ECO:0000255" key="1">
    <source>
        <dbReference type="HAMAP-Rule" id="MF_00737"/>
    </source>
</evidence>
<keyword id="KW-0369">Histidine metabolism</keyword>
<keyword id="KW-0378">Hydrolase</keyword>
<keyword id="KW-0464">Manganese</keyword>
<keyword id="KW-0479">Metal-binding</keyword>
<gene>
    <name evidence="1" type="primary">hutG</name>
    <name type="ordered locus">SpyM3_1780</name>
</gene>
<sequence length="328" mass="36373">MLEDYYPSTTSYYHSGIDDDLYTAKWGMVMTFLDLNDSSLTPFEGTHFALIGFKSDKGVYINNGRVGAVESPAAIRTQLAKFPWHLGNQVMVYDVGNIDGPNRSLEQLQNSLSKAIKRMCDLNLKPIVLGGGHETAYGHYLGLRQSLSSSDDLAVINMDAHFDLRPYDQTGPNSGTGFRQMFDDAVADKRLFKYFVLGIQEHNNNLFLFDFVAKSKGIQFLTGQDIYQMGHQKVCRAIDRFLEGQERVYLTIDMDCFSVGAAPGVSAIQSLGVDPNLAVLVLQHIAASGKLVGFDVVEVSPPHDIDNHTANLAATFIFYLVQIMAQHN</sequence>